<keyword id="KW-0963">Cytoplasm</keyword>
<keyword id="KW-0489">Methyltransferase</keyword>
<keyword id="KW-0949">S-adenosyl-L-methionine</keyword>
<keyword id="KW-0808">Transferase</keyword>
<keyword id="KW-0819">tRNA processing</keyword>
<organism>
    <name type="scientific">Pseudarthrobacter chlorophenolicus (strain ATCC 700700 / DSM 12829 / CIP 107037 / JCM 12360 / KCTC 9906 / NCIMB 13794 / A6)</name>
    <name type="common">Arthrobacter chlorophenolicus</name>
    <dbReference type="NCBI Taxonomy" id="452863"/>
    <lineage>
        <taxon>Bacteria</taxon>
        <taxon>Bacillati</taxon>
        <taxon>Actinomycetota</taxon>
        <taxon>Actinomycetes</taxon>
        <taxon>Micrococcales</taxon>
        <taxon>Micrococcaceae</taxon>
        <taxon>Pseudarthrobacter</taxon>
    </lineage>
</organism>
<feature type="chain" id="PRO_1000147068" description="tRNA (guanine-N(1)-)-methyltransferase">
    <location>
        <begin position="1"/>
        <end position="269"/>
    </location>
</feature>
<feature type="binding site" evidence="1">
    <location>
        <position position="115"/>
    </location>
    <ligand>
        <name>S-adenosyl-L-methionine</name>
        <dbReference type="ChEBI" id="CHEBI:59789"/>
    </ligand>
</feature>
<feature type="binding site" evidence="1">
    <location>
        <begin position="139"/>
        <end position="144"/>
    </location>
    <ligand>
        <name>S-adenosyl-L-methionine</name>
        <dbReference type="ChEBI" id="CHEBI:59789"/>
    </ligand>
</feature>
<gene>
    <name evidence="1" type="primary">trmD</name>
    <name type="ordered locus">Achl_2220</name>
</gene>
<reference key="1">
    <citation type="submission" date="2009-01" db="EMBL/GenBank/DDBJ databases">
        <title>Complete sequence of chromosome of Arthrobacter chlorophenolicus A6.</title>
        <authorList>
            <consortium name="US DOE Joint Genome Institute"/>
            <person name="Lucas S."/>
            <person name="Copeland A."/>
            <person name="Lapidus A."/>
            <person name="Glavina del Rio T."/>
            <person name="Tice H."/>
            <person name="Bruce D."/>
            <person name="Goodwin L."/>
            <person name="Pitluck S."/>
            <person name="Goltsman E."/>
            <person name="Clum A."/>
            <person name="Larimer F."/>
            <person name="Land M."/>
            <person name="Hauser L."/>
            <person name="Kyrpides N."/>
            <person name="Mikhailova N."/>
            <person name="Jansson J."/>
            <person name="Richardson P."/>
        </authorList>
    </citation>
    <scope>NUCLEOTIDE SEQUENCE [LARGE SCALE GENOMIC DNA]</scope>
    <source>
        <strain>ATCC 700700 / DSM 12829 / CIP 107037 / JCM 12360 / KCTC 9906 / NCIMB 13794 / A6</strain>
    </source>
</reference>
<accession>B8HA94</accession>
<proteinExistence type="inferred from homology"/>
<sequence>MRIDVVSIFPEYLAPLELSLIGKARQDGILDLHVHDLRSFTTDRHRTVDDTPYGGGAGMVMKPEPWSQALTAVAEARRGHQGKPVLIVPSPAGERFTQALAHELAGEEHLAFACGRYEGIDERVIEWAGEHFDVRPVSLGDYVLNGGEVAVLAMVEAVGRLLPGVVGNPESLVEESHSDGLLEYPVYTKPAVWRDREVPAILLSGNHGKIAQWRRHEQFRRTSERRPDLLEVFDAGKLPKADRLALQELGYDIVDGRPVRRQGTAEPAG</sequence>
<dbReference type="EC" id="2.1.1.228" evidence="1"/>
<dbReference type="EMBL" id="CP001341">
    <property type="protein sequence ID" value="ACL40186.1"/>
    <property type="molecule type" value="Genomic_DNA"/>
</dbReference>
<dbReference type="RefSeq" id="WP_015937402.1">
    <property type="nucleotide sequence ID" value="NC_011886.1"/>
</dbReference>
<dbReference type="SMR" id="B8HA94"/>
<dbReference type="STRING" id="452863.Achl_2220"/>
<dbReference type="KEGG" id="ach:Achl_2220"/>
<dbReference type="eggNOG" id="COG0336">
    <property type="taxonomic scope" value="Bacteria"/>
</dbReference>
<dbReference type="HOGENOM" id="CLU_047363_0_0_11"/>
<dbReference type="OrthoDB" id="9807416at2"/>
<dbReference type="Proteomes" id="UP000002505">
    <property type="component" value="Chromosome"/>
</dbReference>
<dbReference type="GO" id="GO:0005829">
    <property type="term" value="C:cytosol"/>
    <property type="evidence" value="ECO:0007669"/>
    <property type="project" value="TreeGrafter"/>
</dbReference>
<dbReference type="GO" id="GO:0052906">
    <property type="term" value="F:tRNA (guanine(37)-N1)-methyltransferase activity"/>
    <property type="evidence" value="ECO:0007669"/>
    <property type="project" value="UniProtKB-UniRule"/>
</dbReference>
<dbReference type="GO" id="GO:0002939">
    <property type="term" value="P:tRNA N1-guanine methylation"/>
    <property type="evidence" value="ECO:0007669"/>
    <property type="project" value="TreeGrafter"/>
</dbReference>
<dbReference type="CDD" id="cd18080">
    <property type="entry name" value="TrmD-like"/>
    <property type="match status" value="1"/>
</dbReference>
<dbReference type="FunFam" id="1.10.1270.20:FF:000002">
    <property type="entry name" value="tRNA (guanine-N(1)-)-methyltransferase"/>
    <property type="match status" value="1"/>
</dbReference>
<dbReference type="FunFam" id="3.40.1280.10:FF:000001">
    <property type="entry name" value="tRNA (guanine-N(1)-)-methyltransferase"/>
    <property type="match status" value="1"/>
</dbReference>
<dbReference type="Gene3D" id="3.40.1280.10">
    <property type="match status" value="1"/>
</dbReference>
<dbReference type="Gene3D" id="1.10.1270.20">
    <property type="entry name" value="tRNA(m1g37)methyltransferase, domain 2"/>
    <property type="match status" value="1"/>
</dbReference>
<dbReference type="HAMAP" id="MF_00605">
    <property type="entry name" value="TrmD"/>
    <property type="match status" value="1"/>
</dbReference>
<dbReference type="InterPro" id="IPR029028">
    <property type="entry name" value="Alpha/beta_knot_MTases"/>
</dbReference>
<dbReference type="InterPro" id="IPR023148">
    <property type="entry name" value="tRNA_m1G_MeTrfase_C_sf"/>
</dbReference>
<dbReference type="InterPro" id="IPR002649">
    <property type="entry name" value="tRNA_m1G_MeTrfase_TrmD"/>
</dbReference>
<dbReference type="InterPro" id="IPR029026">
    <property type="entry name" value="tRNA_m1G_MTases_N"/>
</dbReference>
<dbReference type="InterPro" id="IPR016009">
    <property type="entry name" value="tRNA_MeTrfase_TRMD/TRM10"/>
</dbReference>
<dbReference type="NCBIfam" id="NF000648">
    <property type="entry name" value="PRK00026.1"/>
    <property type="match status" value="1"/>
</dbReference>
<dbReference type="NCBIfam" id="TIGR00088">
    <property type="entry name" value="trmD"/>
    <property type="match status" value="1"/>
</dbReference>
<dbReference type="PANTHER" id="PTHR46417">
    <property type="entry name" value="TRNA (GUANINE-N(1)-)-METHYLTRANSFERASE"/>
    <property type="match status" value="1"/>
</dbReference>
<dbReference type="PANTHER" id="PTHR46417:SF1">
    <property type="entry name" value="TRNA (GUANINE-N(1)-)-METHYLTRANSFERASE"/>
    <property type="match status" value="1"/>
</dbReference>
<dbReference type="Pfam" id="PF01746">
    <property type="entry name" value="tRNA_m1G_MT"/>
    <property type="match status" value="1"/>
</dbReference>
<dbReference type="PIRSF" id="PIRSF000386">
    <property type="entry name" value="tRNA_mtase"/>
    <property type="match status" value="1"/>
</dbReference>
<dbReference type="SUPFAM" id="SSF75217">
    <property type="entry name" value="alpha/beta knot"/>
    <property type="match status" value="1"/>
</dbReference>
<name>TRMD_PSECP</name>
<evidence type="ECO:0000255" key="1">
    <source>
        <dbReference type="HAMAP-Rule" id="MF_00605"/>
    </source>
</evidence>
<protein>
    <recommendedName>
        <fullName evidence="1">tRNA (guanine-N(1)-)-methyltransferase</fullName>
        <ecNumber evidence="1">2.1.1.228</ecNumber>
    </recommendedName>
    <alternativeName>
        <fullName evidence="1">M1G-methyltransferase</fullName>
    </alternativeName>
    <alternativeName>
        <fullName evidence="1">tRNA [GM37] methyltransferase</fullName>
    </alternativeName>
</protein>
<comment type="function">
    <text evidence="1">Specifically methylates guanosine-37 in various tRNAs.</text>
</comment>
<comment type="catalytic activity">
    <reaction evidence="1">
        <text>guanosine(37) in tRNA + S-adenosyl-L-methionine = N(1)-methylguanosine(37) in tRNA + S-adenosyl-L-homocysteine + H(+)</text>
        <dbReference type="Rhea" id="RHEA:36899"/>
        <dbReference type="Rhea" id="RHEA-COMP:10145"/>
        <dbReference type="Rhea" id="RHEA-COMP:10147"/>
        <dbReference type="ChEBI" id="CHEBI:15378"/>
        <dbReference type="ChEBI" id="CHEBI:57856"/>
        <dbReference type="ChEBI" id="CHEBI:59789"/>
        <dbReference type="ChEBI" id="CHEBI:73542"/>
        <dbReference type="ChEBI" id="CHEBI:74269"/>
        <dbReference type="EC" id="2.1.1.228"/>
    </reaction>
</comment>
<comment type="subunit">
    <text evidence="1">Homodimer.</text>
</comment>
<comment type="subcellular location">
    <subcellularLocation>
        <location evidence="1">Cytoplasm</location>
    </subcellularLocation>
</comment>
<comment type="similarity">
    <text evidence="1">Belongs to the RNA methyltransferase TrmD family.</text>
</comment>